<comment type="subcellular location">
    <subcellularLocation>
        <location evidence="2">Cytoplasm</location>
    </subcellularLocation>
</comment>
<dbReference type="EMBL" id="AE017197">
    <property type="protein sequence ID" value="AAU03957.1"/>
    <property type="molecule type" value="Genomic_DNA"/>
</dbReference>
<dbReference type="EMBL" id="AF188482">
    <property type="protein sequence ID" value="AAK31303.1"/>
    <property type="molecule type" value="Genomic_DNA"/>
</dbReference>
<dbReference type="RefSeq" id="WP_011190939.1">
    <property type="nucleotide sequence ID" value="NC_006142.1"/>
</dbReference>
<dbReference type="SMR" id="Q9AJ63"/>
<dbReference type="KEGG" id="rty:RT0485"/>
<dbReference type="eggNOG" id="COG5183">
    <property type="taxonomic scope" value="Bacteria"/>
</dbReference>
<dbReference type="HOGENOM" id="CLU_009206_0_0_5"/>
<dbReference type="OrthoDB" id="7161039at2"/>
<dbReference type="Proteomes" id="UP000000604">
    <property type="component" value="Chromosome"/>
</dbReference>
<dbReference type="GO" id="GO:0005737">
    <property type="term" value="C:cytoplasm"/>
    <property type="evidence" value="ECO:0007669"/>
    <property type="project" value="UniProtKB-SubCell"/>
</dbReference>
<dbReference type="InterPro" id="IPR020954">
    <property type="entry name" value="Rickettsia_antigen_120kDa"/>
</dbReference>
<dbReference type="NCBIfam" id="NF038365">
    <property type="entry name" value="Sca4_fam"/>
    <property type="match status" value="1"/>
</dbReference>
<dbReference type="Pfam" id="PF12574">
    <property type="entry name" value="120_Rick_ant"/>
    <property type="match status" value="1"/>
</dbReference>
<sequence length="1019" mass="113828">MSKNDNQDISEFDPLNREFTEAEKQQQMQQEQEFFSQSILDIVDDGFIVASSSQSTPSISVLSNSLPHGDQKSDPITEAIRKEILEKQRDILREYLANTNPELAAQIAKEEDDKKFRAFLSNQDNYALINKAFEDPETKKNLEEVEIVGYRNILSTYSAASGYPGGFQPVQWENQVSASDLRSTVVKNDAGEELCTLNETTIKTNSLIVAKQDGTQVQINSYREIDFPIKLDKADGSMHLSMVALKADGTKPAKDKAVYFTAHYEEGPNGKPQLKEISSPQPLKFVGTGDDAVAYIEHGGEIYTLAVTRGKYKAMMKEVALNNGQSVDLSQTIAEDLTKVQGPSHVRHTPIITPNQELELSIETHSNQQVPPITTFNKPLQPEISQTHQLQPQQAQSSGIPNLVLNAAHALSISMQDLLHNINASLTQKQDINKQSDLIKEAANTILNNKKSDFAEKQYNIIALTENTLSNKDIIADAKVNVVSALLETIQNDQNTLDIQKSKILEATVAITLNSENIELKQKQQILEKVVDVSLSIKDDISRAVAIDSITDAVIKSNIANKDKEQIFMTIFDQVNSYEFSNITKQKLLGSMLKKAVETKVISPEQQQLIHQNLDKITTEHTKRDTIEKVNNILLDPFSNTVLKTTNIQVITANVLDSPVPVEIKSELIQVVTQKVAESALEPKDKTEIVKGIGKIIATHSDTSLPLYDKGVIMESVAKGIVESKTDLRERELITEGLVNGIYEVKGDKAVVHAISSVIANSNINQSEKEVLKKSQDIVSERVLDKEIQNLDGELKEKNIEESKLRDDIYNKTQDVANELNIKTFLDDNHGKREVSEEVPKNTSSLLNDISQRTIEKVNNLRAMLSQDANLKTFEEKKDESTKKVDELVKAFDNKSSTEEQQNFIKSHLIDNKTLSREVRLQIIDNLLKAQAQKRAETIENLSAKTEDVRVVSGKSELEPISKDEPYIQKAKMVVERDRVGIKDNIKIMGALINARDSIQSENLNKSTHIKKESSVPQR</sequence>
<protein>
    <recommendedName>
        <fullName>Antigenic heat-stable 120 kDa protein</fullName>
    </recommendedName>
    <alternativeName>
        <fullName>120 kDa antigen</fullName>
    </alternativeName>
    <alternativeName>
        <fullName>Protein PS 120</fullName>
        <shortName>PS120</shortName>
    </alternativeName>
</protein>
<organism>
    <name type="scientific">Rickettsia typhi (strain ATCC VR-144 / Wilmington)</name>
    <dbReference type="NCBI Taxonomy" id="257363"/>
    <lineage>
        <taxon>Bacteria</taxon>
        <taxon>Pseudomonadati</taxon>
        <taxon>Pseudomonadota</taxon>
        <taxon>Alphaproteobacteria</taxon>
        <taxon>Rickettsiales</taxon>
        <taxon>Rickettsiaceae</taxon>
        <taxon>Rickettsieae</taxon>
        <taxon>Rickettsia</taxon>
        <taxon>typhus group</taxon>
    </lineage>
</organism>
<keyword id="KW-0963">Cytoplasm</keyword>
<name>SCA4_RICTY</name>
<feature type="chain" id="PRO_0000097619" description="Antigenic heat-stable 120 kDa protein">
    <location>
        <begin position="1"/>
        <end position="1019"/>
    </location>
</feature>
<feature type="region of interest" description="Disordered" evidence="1">
    <location>
        <begin position="1"/>
        <end position="33"/>
    </location>
</feature>
<feature type="compositionally biased region" description="Basic and acidic residues" evidence="1">
    <location>
        <begin position="14"/>
        <end position="24"/>
    </location>
</feature>
<feature type="sequence conflict" description="In Ref. 2; AAK31303." evidence="2" ref="2">
    <original>L</original>
    <variation>V</variation>
    <location>
        <position position="15"/>
    </location>
</feature>
<feature type="sequence conflict" description="In Ref. 2; AAK31303." evidence="2" ref="2">
    <original>Q</original>
    <variation>K</variation>
    <location>
        <position position="168"/>
    </location>
</feature>
<feature type="sequence conflict" description="In Ref. 2; AAK31303." evidence="2" ref="2">
    <original>Q</original>
    <variation>H</variation>
    <location>
        <position position="175"/>
    </location>
</feature>
<feature type="sequence conflict" description="In Ref. 2; AAK31303." evidence="2" ref="2">
    <original>S</original>
    <variation>N</variation>
    <location>
        <position position="179"/>
    </location>
</feature>
<feature type="sequence conflict" description="In Ref. 2; AAK31303." evidence="2" ref="2">
    <original>S</original>
    <variation>A</variation>
    <location>
        <position position="183"/>
    </location>
</feature>
<feature type="sequence conflict" description="In Ref. 2; AAK31303." evidence="2" ref="2">
    <original>E</original>
    <variation>D</variation>
    <location>
        <position position="192"/>
    </location>
</feature>
<feature type="sequence conflict" description="In Ref. 2; AAK31303." evidence="2" ref="2">
    <original>IKTNSLIV</original>
    <variation>VKTKPFTL</variation>
    <location>
        <begin position="202"/>
        <end position="209"/>
    </location>
</feature>
<feature type="sequence conflict" description="In Ref. 2; AAK31303." evidence="2" ref="2">
    <original>N</original>
    <variation>S</variation>
    <location>
        <position position="220"/>
    </location>
</feature>
<feature type="sequence conflict" description="In Ref. 2; AAK31303." evidence="2" ref="2">
    <original>E</original>
    <variation>G</variation>
    <location>
        <position position="605"/>
    </location>
</feature>
<feature type="sequence conflict" description="In Ref. 2; AAK31303." evidence="2" ref="2">
    <original>D</original>
    <variation>H</variation>
    <location>
        <position position="615"/>
    </location>
</feature>
<feature type="sequence conflict" description="In Ref. 2." evidence="2" ref="2">
    <original>E</original>
    <variation>VE</variation>
    <location>
        <position position="976"/>
    </location>
</feature>
<feature type="sequence conflict" description="In Ref. 2." evidence="2" ref="2">
    <original>N</original>
    <variation>P</variation>
    <location>
        <position position="1005"/>
    </location>
</feature>
<evidence type="ECO:0000256" key="1">
    <source>
        <dbReference type="SAM" id="MobiDB-lite"/>
    </source>
</evidence>
<evidence type="ECO:0000305" key="2"/>
<accession>Q9AJ63</accession>
<accession>Q68WN5</accession>
<reference key="1">
    <citation type="journal article" date="2004" name="J. Bacteriol.">
        <title>Complete genome sequence of Rickettsia typhi and comparison with sequences of other Rickettsiae.</title>
        <authorList>
            <person name="McLeod M.P."/>
            <person name="Qin X."/>
            <person name="Karpathy S.E."/>
            <person name="Gioia J."/>
            <person name="Highlander S.K."/>
            <person name="Fox G.E."/>
            <person name="McNeill T.Z."/>
            <person name="Jiang H."/>
            <person name="Muzny D."/>
            <person name="Jacob L.S."/>
            <person name="Hawes A.C."/>
            <person name="Sodergren E."/>
            <person name="Gill R."/>
            <person name="Hume J."/>
            <person name="Morgan M."/>
            <person name="Fan G."/>
            <person name="Amin A.G."/>
            <person name="Gibbs R.A."/>
            <person name="Hong C."/>
            <person name="Yu X.-J."/>
            <person name="Walker D.H."/>
            <person name="Weinstock G.M."/>
        </authorList>
    </citation>
    <scope>NUCLEOTIDE SEQUENCE [LARGE SCALE GENOMIC DNA]</scope>
    <source>
        <strain>ATCC VR-144 / Wilmington</strain>
    </source>
</reference>
<reference key="2">
    <citation type="journal article" date="2001" name="Int. J. Syst. Evol. Microbiol.">
        <title>Phylogeny of Rickettsia spp. inferred by comparing sequences of 'gene D', which encodes an intracytoplasmic protein.</title>
        <authorList>
            <person name="Sekeyova Z."/>
            <person name="Roux V."/>
            <person name="Raoult D."/>
        </authorList>
    </citation>
    <scope>NUCLEOTIDE SEQUENCE [GENOMIC DNA] OF 15-1005</scope>
</reference>
<proteinExistence type="predicted"/>
<gene>
    <name type="primary">sca4</name>
    <name type="synonym">D</name>
    <name type="ordered locus">RT0485</name>
</gene>